<keyword id="KW-1064">Adaptive immunity</keyword>
<keyword id="KW-0025">Alternative splicing</keyword>
<keyword id="KW-1003">Cell membrane</keyword>
<keyword id="KW-1015">Disulfide bond</keyword>
<keyword id="KW-0325">Glycoprotein</keyword>
<keyword id="KW-0391">Immunity</keyword>
<keyword id="KW-0393">Immunoglobulin domain</keyword>
<keyword id="KW-0472">Membrane</keyword>
<keyword id="KW-0488">Methylation</keyword>
<keyword id="KW-0597">Phosphoprotein</keyword>
<keyword id="KW-0675">Receptor</keyword>
<keyword id="KW-1185">Reference proteome</keyword>
<keyword id="KW-0732">Signal</keyword>
<keyword id="KW-0812">Transmembrane</keyword>
<keyword id="KW-1133">Transmembrane helix</keyword>
<accession>P40293</accession>
<accession>Q0P5B8</accession>
<accession>Q28134</accession>
<protein>
    <recommendedName>
        <fullName>B-cell antigen receptor complex-associated protein alpha chain</fullName>
    </recommendedName>
    <alternativeName>
        <fullName>Ig-alpha</fullName>
    </alternativeName>
    <alternativeName>
        <fullName>MB-1 membrane glycoprotein</fullName>
    </alternativeName>
    <alternativeName>
        <fullName>Membrane-bound immunoglobulin-associated protein</fullName>
    </alternativeName>
    <alternativeName>
        <fullName>Surface IgM-associated protein</fullName>
    </alternativeName>
    <cdAntigenName>CD79a</cdAntigenName>
</protein>
<proteinExistence type="evidence at transcript level"/>
<gene>
    <name type="primary">CD79A</name>
    <name type="synonym">IGA</name>
    <name type="synonym">MB-1</name>
</gene>
<dbReference type="EMBL" id="D16412">
    <property type="protein sequence ID" value="BAA03899.1"/>
    <property type="molecule type" value="mRNA"/>
</dbReference>
<dbReference type="EMBL" id="D16459">
    <property type="protein sequence ID" value="BAA03926.1"/>
    <property type="molecule type" value="mRNA"/>
</dbReference>
<dbReference type="EMBL" id="BC120260">
    <property type="protein sequence ID" value="AAI20261.1"/>
    <property type="molecule type" value="mRNA"/>
</dbReference>
<dbReference type="PIR" id="I45927">
    <property type="entry name" value="I45927"/>
</dbReference>
<dbReference type="RefSeq" id="NP_776691.2">
    <molecule id="P40293-1"/>
    <property type="nucleotide sequence ID" value="NM_174266.4"/>
</dbReference>
<dbReference type="SMR" id="P40293"/>
<dbReference type="FunCoup" id="P40293">
    <property type="interactions" value="365"/>
</dbReference>
<dbReference type="STRING" id="9913.ENSBTAP00000002451"/>
<dbReference type="GlyCosmos" id="P40293">
    <property type="glycosylation" value="4 sites, No reported glycans"/>
</dbReference>
<dbReference type="GlyGen" id="P40293">
    <property type="glycosylation" value="4 sites"/>
</dbReference>
<dbReference type="PaxDb" id="9913-ENSBTAP00000002451"/>
<dbReference type="Ensembl" id="ENSBTAT00000002451.5">
    <molecule id="P40293-1"/>
    <property type="protein sequence ID" value="ENSBTAP00000002451.3"/>
    <property type="gene ID" value="ENSBTAG00000001882.6"/>
</dbReference>
<dbReference type="Ensembl" id="ENSBTAT00000119380.1">
    <molecule id="P40293-2"/>
    <property type="protein sequence ID" value="ENSBTAP00000093505.1"/>
    <property type="gene ID" value="ENSBTAG00000001882.6"/>
</dbReference>
<dbReference type="GeneID" id="281674"/>
<dbReference type="KEGG" id="bta:281674"/>
<dbReference type="CTD" id="973"/>
<dbReference type="VEuPathDB" id="HostDB:ENSBTAG00000001882"/>
<dbReference type="eggNOG" id="ENOG502S1DI">
    <property type="taxonomic scope" value="Eukaryota"/>
</dbReference>
<dbReference type="GeneTree" id="ENSGT00940000154363"/>
<dbReference type="HOGENOM" id="CLU_106774_0_0_1"/>
<dbReference type="InParanoid" id="P40293"/>
<dbReference type="OMA" id="RWQNEKF"/>
<dbReference type="OrthoDB" id="8915525at2759"/>
<dbReference type="TreeFam" id="TF336032"/>
<dbReference type="Reactome" id="R-BTA-5690714">
    <property type="pathway name" value="CD22 mediated BCR regulation"/>
</dbReference>
<dbReference type="Reactome" id="R-BTA-983695">
    <property type="pathway name" value="Antigen activates B Cell Receptor (BCR) leading to generation of second messengers"/>
</dbReference>
<dbReference type="Proteomes" id="UP000009136">
    <property type="component" value="Chromosome 18"/>
</dbReference>
<dbReference type="Bgee" id="ENSBTAG00000001882">
    <property type="expression patterns" value="Expressed in blood and 83 other cell types or tissues"/>
</dbReference>
<dbReference type="GO" id="GO:0019815">
    <property type="term" value="C:B cell receptor complex"/>
    <property type="evidence" value="ECO:0000250"/>
    <property type="project" value="UniProtKB"/>
</dbReference>
<dbReference type="GO" id="GO:0009897">
    <property type="term" value="C:external side of plasma membrane"/>
    <property type="evidence" value="ECO:0000250"/>
    <property type="project" value="UniProtKB"/>
</dbReference>
<dbReference type="GO" id="GO:0071755">
    <property type="term" value="C:IgM B cell receptor complex"/>
    <property type="evidence" value="ECO:0000250"/>
    <property type="project" value="UniProtKB"/>
</dbReference>
<dbReference type="GO" id="GO:0045121">
    <property type="term" value="C:membrane raft"/>
    <property type="evidence" value="ECO:0000250"/>
    <property type="project" value="UniProtKB"/>
</dbReference>
<dbReference type="GO" id="GO:0005771">
    <property type="term" value="C:multivesicular body"/>
    <property type="evidence" value="ECO:0000250"/>
    <property type="project" value="UniProtKB"/>
</dbReference>
<dbReference type="GO" id="GO:0042802">
    <property type="term" value="F:identical protein binding"/>
    <property type="evidence" value="ECO:0007669"/>
    <property type="project" value="Ensembl"/>
</dbReference>
<dbReference type="GO" id="GO:0004888">
    <property type="term" value="F:transmembrane signaling receptor activity"/>
    <property type="evidence" value="ECO:0007669"/>
    <property type="project" value="Ensembl"/>
</dbReference>
<dbReference type="GO" id="GO:0002250">
    <property type="term" value="P:adaptive immune response"/>
    <property type="evidence" value="ECO:0007669"/>
    <property type="project" value="UniProtKB-KW"/>
</dbReference>
<dbReference type="GO" id="GO:0042113">
    <property type="term" value="P:B cell activation"/>
    <property type="evidence" value="ECO:0000250"/>
    <property type="project" value="UniProtKB"/>
</dbReference>
<dbReference type="GO" id="GO:0030183">
    <property type="term" value="P:B cell differentiation"/>
    <property type="evidence" value="ECO:0000250"/>
    <property type="project" value="UniProtKB"/>
</dbReference>
<dbReference type="GO" id="GO:0042100">
    <property type="term" value="P:B cell proliferation"/>
    <property type="evidence" value="ECO:0000250"/>
    <property type="project" value="UniProtKB"/>
</dbReference>
<dbReference type="GO" id="GO:0050853">
    <property type="term" value="P:B cell receptor signaling pathway"/>
    <property type="evidence" value="ECO:0000250"/>
    <property type="project" value="UniProtKB"/>
</dbReference>
<dbReference type="CDD" id="cd00096">
    <property type="entry name" value="Ig"/>
    <property type="match status" value="1"/>
</dbReference>
<dbReference type="FunFam" id="2.60.40.10:FF:001852">
    <property type="entry name" value="B-cell antigen receptor complex-associated protein alpha chain"/>
    <property type="match status" value="1"/>
</dbReference>
<dbReference type="Gene3D" id="2.60.40.10">
    <property type="entry name" value="Immunoglobulins"/>
    <property type="match status" value="1"/>
</dbReference>
<dbReference type="InterPro" id="IPR007110">
    <property type="entry name" value="Ig-like_dom"/>
</dbReference>
<dbReference type="InterPro" id="IPR036179">
    <property type="entry name" value="Ig-like_dom_sf"/>
</dbReference>
<dbReference type="InterPro" id="IPR013783">
    <property type="entry name" value="Ig-like_fold"/>
</dbReference>
<dbReference type="InterPro" id="IPR003599">
    <property type="entry name" value="Ig_sub"/>
</dbReference>
<dbReference type="InterPro" id="IPR003598">
    <property type="entry name" value="Ig_sub2"/>
</dbReference>
<dbReference type="InterPro" id="IPR003110">
    <property type="entry name" value="Phos_immunorcpt_sig_ITAM"/>
</dbReference>
<dbReference type="PANTHER" id="PTHR14334">
    <property type="entry name" value="B-CELL ANTIGEN RECEPTOR COMPLEX-ASSOCIATED PROTEIN"/>
    <property type="match status" value="1"/>
</dbReference>
<dbReference type="PANTHER" id="PTHR14334:SF1">
    <property type="entry name" value="B-CELL ANTIGEN RECEPTOR COMPLEX-ASSOCIATED PROTEIN ALPHA CHAIN"/>
    <property type="match status" value="1"/>
</dbReference>
<dbReference type="Pfam" id="PF13927">
    <property type="entry name" value="Ig_3"/>
    <property type="match status" value="1"/>
</dbReference>
<dbReference type="Pfam" id="PF02189">
    <property type="entry name" value="ITAM"/>
    <property type="match status" value="1"/>
</dbReference>
<dbReference type="SMART" id="SM00409">
    <property type="entry name" value="IG"/>
    <property type="match status" value="1"/>
</dbReference>
<dbReference type="SMART" id="SM00408">
    <property type="entry name" value="IGc2"/>
    <property type="match status" value="1"/>
</dbReference>
<dbReference type="SMART" id="SM00077">
    <property type="entry name" value="ITAM"/>
    <property type="match status" value="1"/>
</dbReference>
<dbReference type="SUPFAM" id="SSF48726">
    <property type="entry name" value="Immunoglobulin"/>
    <property type="match status" value="1"/>
</dbReference>
<dbReference type="PROSITE" id="PS50835">
    <property type="entry name" value="IG_LIKE"/>
    <property type="match status" value="1"/>
</dbReference>
<dbReference type="PROSITE" id="PS51055">
    <property type="entry name" value="ITAM_1"/>
    <property type="match status" value="1"/>
</dbReference>
<evidence type="ECO:0000250" key="1"/>
<evidence type="ECO:0000250" key="2">
    <source>
        <dbReference type="UniProtKB" id="P11911"/>
    </source>
</evidence>
<evidence type="ECO:0000250" key="3">
    <source>
        <dbReference type="UniProtKB" id="P11912"/>
    </source>
</evidence>
<evidence type="ECO:0000255" key="4"/>
<evidence type="ECO:0000255" key="5">
    <source>
        <dbReference type="PROSITE-ProRule" id="PRU00114"/>
    </source>
</evidence>
<evidence type="ECO:0000255" key="6">
    <source>
        <dbReference type="PROSITE-ProRule" id="PRU00379"/>
    </source>
</evidence>
<evidence type="ECO:0000303" key="7">
    <source>
    </source>
</evidence>
<feature type="signal peptide" evidence="4">
    <location>
        <begin position="1"/>
        <end position="31"/>
    </location>
</feature>
<feature type="chain" id="PRO_0000014557" description="B-cell antigen receptor complex-associated protein alpha chain">
    <location>
        <begin position="32"/>
        <end position="223"/>
    </location>
</feature>
<feature type="topological domain" description="Extracellular" evidence="4">
    <location>
        <begin position="32"/>
        <end position="140"/>
    </location>
</feature>
<feature type="transmembrane region" description="Helical" evidence="4">
    <location>
        <begin position="141"/>
        <end position="161"/>
    </location>
</feature>
<feature type="topological domain" description="Cytoplasmic" evidence="4">
    <location>
        <begin position="162"/>
        <end position="223"/>
    </location>
</feature>
<feature type="domain" description="Ig-like C2-type">
    <location>
        <begin position="32"/>
        <end position="120"/>
    </location>
</feature>
<feature type="domain" description="ITAM" evidence="6">
    <location>
        <begin position="174"/>
        <end position="202"/>
    </location>
</feature>
<feature type="site" description="Required for binding to BLNK" evidence="1">
    <location>
        <position position="207"/>
    </location>
</feature>
<feature type="modified residue" description="Phosphotyrosine; by SRC-type Tyr-kinases" evidence="2 6">
    <location>
        <position position="185"/>
    </location>
</feature>
<feature type="modified residue" description="Phosphotyrosine" evidence="2 6">
    <location>
        <position position="196"/>
    </location>
</feature>
<feature type="modified residue" description="Asymmetric dimethylarginine; by PRMT1" evidence="2">
    <location>
        <position position="201"/>
    </location>
</feature>
<feature type="modified residue" description="Phosphotyrosine; by Tyr-kinases" evidence="2 6">
    <location>
        <position position="207"/>
    </location>
</feature>
<feature type="glycosylation site" description="N-linked (GlcNAc...) asparagine" evidence="4">
    <location>
        <position position="56"/>
    </location>
</feature>
<feature type="glycosylation site" description="N-linked (GlcNAc...) asparagine" evidence="4">
    <location>
        <position position="61"/>
    </location>
</feature>
<feature type="glycosylation site" description="N-linked (GlcNAc...) asparagine" evidence="4">
    <location>
        <position position="71"/>
    </location>
</feature>
<feature type="glycosylation site" description="N-linked (GlcNAc...) asparagine" evidence="4">
    <location>
        <position position="95"/>
    </location>
</feature>
<feature type="disulfide bond" evidence="5">
    <location>
        <begin position="53"/>
        <end position="104"/>
    </location>
</feature>
<feature type="disulfide bond" description="Interchain (with beta chain)" evidence="5">
    <location>
        <position position="116"/>
    </location>
</feature>
<feature type="splice variant" id="VSP_027221" description="In isoform 2." evidence="7">
    <original>DPLPRPFLDM</original>
    <variation>ETMAEHEIRG</variation>
    <location>
        <begin position="124"/>
        <end position="133"/>
    </location>
</feature>
<feature type="splice variant" id="VSP_027222" description="In isoform 2." evidence="7">
    <location>
        <begin position="134"/>
        <end position="223"/>
    </location>
</feature>
<sequence>MPEGPQALQSPPATIFLLLISAAGLGPGCQALWVEWGPPSVTVSVGEEVRLQCTHNGSNTNVTWWHVLQSNSSWPPVMYRGDVGAGGELIIKPVNKTHRGMYRCQVSDGKKIQRSCGTYLRVRDPLPRPFLDMGEGTKNNIITAEGIILLICAVVPGTLLLFRKRWQNMKFGADIQDDYEDENLYEGLNLDDCSMYEDISRGLQGTYQDVGSLHIGDAQLEKP</sequence>
<name>CD79A_BOVIN</name>
<organism>
    <name type="scientific">Bos taurus</name>
    <name type="common">Bovine</name>
    <dbReference type="NCBI Taxonomy" id="9913"/>
    <lineage>
        <taxon>Eukaryota</taxon>
        <taxon>Metazoa</taxon>
        <taxon>Chordata</taxon>
        <taxon>Craniata</taxon>
        <taxon>Vertebrata</taxon>
        <taxon>Euteleostomi</taxon>
        <taxon>Mammalia</taxon>
        <taxon>Eutheria</taxon>
        <taxon>Laurasiatheria</taxon>
        <taxon>Artiodactyla</taxon>
        <taxon>Ruminantia</taxon>
        <taxon>Pecora</taxon>
        <taxon>Bovidae</taxon>
        <taxon>Bovinae</taxon>
        <taxon>Bos</taxon>
    </lineage>
</organism>
<reference key="1">
    <citation type="journal article" date="1994" name="J. Immunol.">
        <title>Two forms of the mb-1 gene transcript in cattle.</title>
        <authorList>
            <person name="Youn H.-Y."/>
            <person name="Goitsuka R."/>
            <person name="Okuda M."/>
            <person name="Watari T."/>
            <person name="Tsujimoto H."/>
            <person name="Hasegawa A."/>
        </authorList>
    </citation>
    <scope>NUCLEOTIDE SEQUENCE [MRNA] (ISOFORMS 1 AND 2)</scope>
    <source>
        <tissue>Leukocyte</tissue>
        <tissue>Lymphoblast</tissue>
    </source>
</reference>
<reference key="2">
    <citation type="journal article" date="1996" name="Vet. Immunol. Immunopathol.">
        <title>Molecular cloning of bovine mb-1 cDNA.</title>
        <authorList>
            <person name="Youn H.-Y."/>
            <person name="Goitsuka R."/>
            <person name="Kato H."/>
            <person name="Mason D.Y."/>
            <person name="Watari T."/>
            <person name="Tsujimoto H."/>
            <person name="Hasegawa A."/>
        </authorList>
    </citation>
    <scope>NUCLEOTIDE SEQUENCE [MRNA] (ISOFORM 1)</scope>
</reference>
<reference key="3">
    <citation type="submission" date="2006-08" db="EMBL/GenBank/DDBJ databases">
        <authorList>
            <consortium name="NIH - Mammalian Gene Collection (MGC) project"/>
        </authorList>
    </citation>
    <scope>NUCLEOTIDE SEQUENCE [LARGE SCALE MRNA] (ISOFORM 1)</scope>
    <source>
        <strain>Hereford</strain>
        <tissue>Thymus</tissue>
    </source>
</reference>
<comment type="function">
    <text evidence="1">Required in cooperation with CD79B for initiation of the signal transduction cascade activated by binding of antigen to the B-cell antigen receptor complex (BCR) which leads to internalization of the complex, trafficking to late endosomes and antigen presentation. Also required for BCR surface expression and for efficient differentiation of pro- and pre-B-cells. Stimulates SYK autophosphorylation and activation. Binds to BLNK, bringing BLNK into proximity with SYK and allowing SYK to phosphorylate BLNK. Also interacts with and increases activity of some Src-family tyrosine kinases. Represses BCR signaling during development of immature B-cells (By similarity).</text>
</comment>
<comment type="subunit">
    <text evidence="1">Heterodimer of alpha and beta chains; disulfide-linked. Part of the B-cell antigen receptor complex where the alpha/beta chain heterodimer is non-covalently associated with an antigen-specific membrane-bound surface immunoglobulin of two heavy chains and two light chains. Interacts through its phosphorylated ITAM domain with the SH2 domains of SYK which stimulates SYK autophosphorylation and activation. Also interacts, when phosphorylated on Tyr-207, with the SH2 domain of BLNK/SLP65, bringing BLNK into proximity with SYK and allowing SYK to phosphorylate BLNK which is necessary for trafficking of the BCR to late endosomes. Interacts with Src-family tyrosine kinases including FYN and LYN, increasing their activity (By similarity).</text>
</comment>
<comment type="subcellular location">
    <subcellularLocation>
        <location>Cell membrane</location>
        <topology>Single-pass type I membrane protein</topology>
    </subcellularLocation>
    <text evidence="1">Following antigen binding, the BCR has been shown to translocate from detergent-soluble regions of the cell membrane to lipid rafts although signal transduction through the complex can also occur outside lipid rafts.</text>
</comment>
<comment type="alternative products">
    <event type="alternative splicing"/>
    <isoform>
        <id>P40293-1</id>
        <name>1</name>
        <sequence type="displayed"/>
    </isoform>
    <isoform>
        <id>P40293-2</id>
        <name>2</name>
        <sequence type="described" ref="VSP_027221 VSP_027222"/>
    </isoform>
</comment>
<comment type="tissue specificity">
    <text>B-cells.</text>
</comment>
<comment type="domain">
    <text evidence="3">The transmembrane helices of CD79A and CD79B chains and two IgM heavy chains assembly in a four-helix bundle structure that appears to be conserved among different BCR isotypes.</text>
</comment>
<comment type="PTM">
    <text evidence="1">Phosphorylated on tyrosine, serine and threonine residues upon B-cell activation. Phosphorylation of tyrosine residues by Src-family kinases, including LYN, is an early and essential feature of the BCR signaling cascade. The phosphorylated tyrosines serve as docking sites for SH2-domain containing kinases, leading to their activation which in turn leads to phosphorylation of downstream targets. Phosphorylation of serine and threonine residues may prevent subsequent tyrosine phosphorylation (By similarity).</text>
</comment>
<comment type="PTM">
    <text evidence="1">Arginine methylation in the ITAM domain may interfere with the binding of SYK. It promotes signals leading to B-cell differentiation (By similarity).</text>
</comment>